<gene>
    <name type="primary">rpl2-A</name>
</gene>
<gene>
    <name type="primary">rpl2-B</name>
</gene>
<reference key="1">
    <citation type="journal article" date="2003" name="Mol. Biol. Evol.">
        <title>Analysis of the Amborella trichopoda chloroplast genome sequence suggests that Amborella is not a basal angiosperm.</title>
        <authorList>
            <person name="Goremykin V.V."/>
            <person name="Hirsch-Ernst K.I."/>
            <person name="Wolfl S."/>
            <person name="Hellwig F.H."/>
        </authorList>
    </citation>
    <scope>NUCLEOTIDE SEQUENCE [LARGE SCALE GENOMIC DNA]</scope>
    <scope>SUGGESTION OF RNA EDITING</scope>
</reference>
<keyword id="KW-0150">Chloroplast</keyword>
<keyword id="KW-0934">Plastid</keyword>
<keyword id="KW-1185">Reference proteome</keyword>
<keyword id="KW-0687">Ribonucleoprotein</keyword>
<keyword id="KW-0689">Ribosomal protein</keyword>
<keyword id="KW-0691">RNA editing</keyword>
<protein>
    <recommendedName>
        <fullName evidence="2">Large ribosomal subunit protein uL2cz/uL2cy</fullName>
    </recommendedName>
    <alternativeName>
        <fullName evidence="4">50S ribosomal protein L2, chloroplastic</fullName>
    </alternativeName>
</protein>
<feature type="chain" id="PRO_0000129662" description="Large ribosomal subunit protein uL2cz/uL2cy">
    <location>
        <begin position="1"/>
        <end position="273"/>
    </location>
</feature>
<feature type="region of interest" description="Disordered" evidence="3">
    <location>
        <begin position="1"/>
        <end position="23"/>
    </location>
</feature>
<feature type="region of interest" description="Disordered" evidence="3">
    <location>
        <begin position="224"/>
        <end position="273"/>
    </location>
</feature>
<geneLocation type="chloroplast"/>
<dbReference type="EMBL" id="AJ506156">
    <property type="protein sequence ID" value="CAD47814.1"/>
    <property type="molecule type" value="Genomic_DNA"/>
</dbReference>
<dbReference type="EMBL" id="AJ506156">
    <property type="protein sequence ID" value="CAD47816.1"/>
    <property type="molecule type" value="Genomic_DNA"/>
</dbReference>
<dbReference type="SMR" id="P60406"/>
<dbReference type="STRING" id="13333.P60406"/>
<dbReference type="KEGG" id="atr:2546582"/>
<dbReference type="KEGG" id="atr:2546594"/>
<dbReference type="eggNOG" id="KOG0438">
    <property type="taxonomic scope" value="Eukaryota"/>
</dbReference>
<dbReference type="OrthoDB" id="563959at2759"/>
<dbReference type="Proteomes" id="UP000017836">
    <property type="component" value="Chloroplast"/>
</dbReference>
<dbReference type="GO" id="GO:0009507">
    <property type="term" value="C:chloroplast"/>
    <property type="evidence" value="ECO:0007669"/>
    <property type="project" value="UniProtKB-SubCell"/>
</dbReference>
<dbReference type="GO" id="GO:0005762">
    <property type="term" value="C:mitochondrial large ribosomal subunit"/>
    <property type="evidence" value="ECO:0000318"/>
    <property type="project" value="GO_Central"/>
</dbReference>
<dbReference type="GO" id="GO:0003723">
    <property type="term" value="F:RNA binding"/>
    <property type="evidence" value="ECO:0000318"/>
    <property type="project" value="GO_Central"/>
</dbReference>
<dbReference type="GO" id="GO:0019843">
    <property type="term" value="F:rRNA binding"/>
    <property type="evidence" value="ECO:0007669"/>
    <property type="project" value="UniProtKB-UniRule"/>
</dbReference>
<dbReference type="GO" id="GO:0003735">
    <property type="term" value="F:structural constituent of ribosome"/>
    <property type="evidence" value="ECO:0000318"/>
    <property type="project" value="GO_Central"/>
</dbReference>
<dbReference type="GO" id="GO:0016740">
    <property type="term" value="F:transferase activity"/>
    <property type="evidence" value="ECO:0007669"/>
    <property type="project" value="InterPro"/>
</dbReference>
<dbReference type="GO" id="GO:0032543">
    <property type="term" value="P:mitochondrial translation"/>
    <property type="evidence" value="ECO:0000318"/>
    <property type="project" value="GO_Central"/>
</dbReference>
<dbReference type="FunFam" id="4.10.950.10:FF:000001">
    <property type="entry name" value="50S ribosomal protein L2"/>
    <property type="match status" value="1"/>
</dbReference>
<dbReference type="FunFam" id="2.30.30.30:FF:000008">
    <property type="entry name" value="50S ribosomal protein L2, chloroplastic"/>
    <property type="match status" value="1"/>
</dbReference>
<dbReference type="FunFam" id="2.40.50.140:FF:000029">
    <property type="entry name" value="50S ribosomal protein L2, chloroplastic"/>
    <property type="match status" value="1"/>
</dbReference>
<dbReference type="Gene3D" id="2.30.30.30">
    <property type="match status" value="1"/>
</dbReference>
<dbReference type="Gene3D" id="2.40.50.140">
    <property type="entry name" value="Nucleic acid-binding proteins"/>
    <property type="match status" value="1"/>
</dbReference>
<dbReference type="Gene3D" id="4.10.950.10">
    <property type="entry name" value="Ribosomal protein L2, domain 3"/>
    <property type="match status" value="1"/>
</dbReference>
<dbReference type="HAMAP" id="MF_01320_B">
    <property type="entry name" value="Ribosomal_uL2_B"/>
    <property type="match status" value="1"/>
</dbReference>
<dbReference type="InterPro" id="IPR012340">
    <property type="entry name" value="NA-bd_OB-fold"/>
</dbReference>
<dbReference type="InterPro" id="IPR014722">
    <property type="entry name" value="Rib_uL2_dom2"/>
</dbReference>
<dbReference type="InterPro" id="IPR002171">
    <property type="entry name" value="Ribosomal_uL2"/>
</dbReference>
<dbReference type="InterPro" id="IPR005880">
    <property type="entry name" value="Ribosomal_uL2_bac/org-type"/>
</dbReference>
<dbReference type="InterPro" id="IPR022669">
    <property type="entry name" value="Ribosomal_uL2_C"/>
</dbReference>
<dbReference type="InterPro" id="IPR022671">
    <property type="entry name" value="Ribosomal_uL2_CS"/>
</dbReference>
<dbReference type="InterPro" id="IPR014726">
    <property type="entry name" value="Ribosomal_uL2_dom3"/>
</dbReference>
<dbReference type="InterPro" id="IPR022666">
    <property type="entry name" value="Ribosomal_uL2_RNA-bd_dom"/>
</dbReference>
<dbReference type="InterPro" id="IPR008991">
    <property type="entry name" value="Translation_prot_SH3-like_sf"/>
</dbReference>
<dbReference type="NCBIfam" id="TIGR01171">
    <property type="entry name" value="rplB_bact"/>
    <property type="match status" value="1"/>
</dbReference>
<dbReference type="PANTHER" id="PTHR13691:SF5">
    <property type="entry name" value="LARGE RIBOSOMAL SUBUNIT PROTEIN UL2M"/>
    <property type="match status" value="1"/>
</dbReference>
<dbReference type="PANTHER" id="PTHR13691">
    <property type="entry name" value="RIBOSOMAL PROTEIN L2"/>
    <property type="match status" value="1"/>
</dbReference>
<dbReference type="Pfam" id="PF00181">
    <property type="entry name" value="Ribosomal_L2"/>
    <property type="match status" value="1"/>
</dbReference>
<dbReference type="Pfam" id="PF03947">
    <property type="entry name" value="Ribosomal_L2_C"/>
    <property type="match status" value="1"/>
</dbReference>
<dbReference type="PIRSF" id="PIRSF002158">
    <property type="entry name" value="Ribosomal_L2"/>
    <property type="match status" value="1"/>
</dbReference>
<dbReference type="SMART" id="SM01383">
    <property type="entry name" value="Ribosomal_L2"/>
    <property type="match status" value="1"/>
</dbReference>
<dbReference type="SMART" id="SM01382">
    <property type="entry name" value="Ribosomal_L2_C"/>
    <property type="match status" value="1"/>
</dbReference>
<dbReference type="SUPFAM" id="SSF50249">
    <property type="entry name" value="Nucleic acid-binding proteins"/>
    <property type="match status" value="1"/>
</dbReference>
<dbReference type="SUPFAM" id="SSF50104">
    <property type="entry name" value="Translation proteins SH3-like domain"/>
    <property type="match status" value="1"/>
</dbReference>
<dbReference type="PROSITE" id="PS00467">
    <property type="entry name" value="RIBOSOMAL_L2"/>
    <property type="match status" value="1"/>
</dbReference>
<comment type="subunit">
    <text evidence="1">Part of the 50S ribosomal subunit.</text>
</comment>
<comment type="subcellular location">
    <subcellularLocation>
        <location>Plastid</location>
        <location>Chloroplast</location>
    </subcellularLocation>
</comment>
<comment type="RNA editing">
    <location>
        <position position="1" evidence="5"/>
    </location>
    <text evidence="5">The initiator methionine is created by RNA editing.</text>
</comment>
<comment type="similarity">
    <text evidence="4">Belongs to the universal ribosomal protein uL2 family.</text>
</comment>
<accession>P60406</accession>
<organism>
    <name type="scientific">Amborella trichopoda</name>
    <dbReference type="NCBI Taxonomy" id="13333"/>
    <lineage>
        <taxon>Eukaryota</taxon>
        <taxon>Viridiplantae</taxon>
        <taxon>Streptophyta</taxon>
        <taxon>Embryophyta</taxon>
        <taxon>Tracheophyta</taxon>
        <taxon>Spermatophyta</taxon>
        <taxon>Magnoliopsida</taxon>
        <taxon>Amborellales</taxon>
        <taxon>Amborellaceae</taxon>
        <taxon>Amborella</taxon>
    </lineage>
</organism>
<evidence type="ECO:0000250" key="1"/>
<evidence type="ECO:0000255" key="2">
    <source>
        <dbReference type="HAMAP-Rule" id="MF_01320"/>
    </source>
</evidence>
<evidence type="ECO:0000256" key="3">
    <source>
        <dbReference type="SAM" id="MobiDB-lite"/>
    </source>
</evidence>
<evidence type="ECO:0000305" key="4"/>
<evidence type="ECO:0000305" key="5">
    <source>
    </source>
</evidence>
<sequence length="273" mass="29704">MAIHLYKTSTPSTRNGAVDSQVKSNPRKNLIYGQHRCGKGRNARGIITAGHRGGGHKRLYRKIDFRRNEKDISGRIVTIEYDPNRNAYICLIHYGDGEKRYILHPRGAIIGDTIVSGTEVPISMGNALPLTDMPLGTAIHNIEITLGKGGQLARAAGAVAKLIAKEGKSATLRLPSGEVRLISKNCSATVGQVGNVGVNQKILGRAGSKCWLGKRPVVRGVVMNPVDHPHGGGEGRAPIGRKKPTTPWGYPALGRRSRKKKKYSDSFILRRRK</sequence>
<name>RK2_AMBTC</name>
<proteinExistence type="evidence at transcript level"/>